<sequence>MNKIRKGDEVIVITGKDKGKRGVVLAVGAEHVTVEGINLVKKHVKPNPMKGTTGGVEAKTMPLHISNVALVDANGKASRVGIKVEDGKKVRFLKTTGAVLSA</sequence>
<keyword id="KW-0687">Ribonucleoprotein</keyword>
<keyword id="KW-0689">Ribosomal protein</keyword>
<keyword id="KW-0694">RNA-binding</keyword>
<keyword id="KW-0699">rRNA-binding</keyword>
<proteinExistence type="inferred from homology"/>
<protein>
    <recommendedName>
        <fullName evidence="1">Large ribosomal subunit protein uL24</fullName>
    </recommendedName>
    <alternativeName>
        <fullName evidence="2">50S ribosomal protein L24</fullName>
    </alternativeName>
</protein>
<comment type="function">
    <text evidence="1">One of two assembly initiator proteins, it binds directly to the 5'-end of the 23S rRNA, where it nucleates assembly of the 50S subunit.</text>
</comment>
<comment type="function">
    <text evidence="1">One of the proteins that surrounds the polypeptide exit tunnel on the outside of the subunit.</text>
</comment>
<comment type="subunit">
    <text evidence="1">Part of the 50S ribosomal subunit.</text>
</comment>
<comment type="similarity">
    <text evidence="1">Belongs to the universal ribosomal protein uL24 family.</text>
</comment>
<feature type="chain" id="PRO_0000241580" description="Large ribosomal subunit protein uL24">
    <location>
        <begin position="1"/>
        <end position="102"/>
    </location>
</feature>
<dbReference type="EMBL" id="CP000086">
    <property type="protein sequence ID" value="ABC38083.1"/>
    <property type="molecule type" value="Genomic_DNA"/>
</dbReference>
<dbReference type="RefSeq" id="WP_004197950.1">
    <property type="nucleotide sequence ID" value="NZ_CP008786.1"/>
</dbReference>
<dbReference type="SMR" id="Q2SU38"/>
<dbReference type="GeneID" id="93061821"/>
<dbReference type="KEGG" id="bte:BTH_I3057"/>
<dbReference type="HOGENOM" id="CLU_093315_2_2_4"/>
<dbReference type="Proteomes" id="UP000001930">
    <property type="component" value="Chromosome I"/>
</dbReference>
<dbReference type="GO" id="GO:1990904">
    <property type="term" value="C:ribonucleoprotein complex"/>
    <property type="evidence" value="ECO:0007669"/>
    <property type="project" value="UniProtKB-KW"/>
</dbReference>
<dbReference type="GO" id="GO:0005840">
    <property type="term" value="C:ribosome"/>
    <property type="evidence" value="ECO:0007669"/>
    <property type="project" value="UniProtKB-KW"/>
</dbReference>
<dbReference type="GO" id="GO:0019843">
    <property type="term" value="F:rRNA binding"/>
    <property type="evidence" value="ECO:0007669"/>
    <property type="project" value="UniProtKB-UniRule"/>
</dbReference>
<dbReference type="GO" id="GO:0003735">
    <property type="term" value="F:structural constituent of ribosome"/>
    <property type="evidence" value="ECO:0007669"/>
    <property type="project" value="InterPro"/>
</dbReference>
<dbReference type="GO" id="GO:0006412">
    <property type="term" value="P:translation"/>
    <property type="evidence" value="ECO:0007669"/>
    <property type="project" value="UniProtKB-UniRule"/>
</dbReference>
<dbReference type="CDD" id="cd06089">
    <property type="entry name" value="KOW_RPL26"/>
    <property type="match status" value="1"/>
</dbReference>
<dbReference type="Gene3D" id="2.30.30.30">
    <property type="match status" value="1"/>
</dbReference>
<dbReference type="HAMAP" id="MF_01326_B">
    <property type="entry name" value="Ribosomal_uL24_B"/>
    <property type="match status" value="1"/>
</dbReference>
<dbReference type="InterPro" id="IPR005824">
    <property type="entry name" value="KOW"/>
</dbReference>
<dbReference type="InterPro" id="IPR014722">
    <property type="entry name" value="Rib_uL2_dom2"/>
</dbReference>
<dbReference type="InterPro" id="IPR003256">
    <property type="entry name" value="Ribosomal_uL24"/>
</dbReference>
<dbReference type="InterPro" id="IPR005825">
    <property type="entry name" value="Ribosomal_uL24_CS"/>
</dbReference>
<dbReference type="InterPro" id="IPR041988">
    <property type="entry name" value="Ribosomal_uL24_KOW"/>
</dbReference>
<dbReference type="InterPro" id="IPR008991">
    <property type="entry name" value="Translation_prot_SH3-like_sf"/>
</dbReference>
<dbReference type="NCBIfam" id="TIGR01079">
    <property type="entry name" value="rplX_bact"/>
    <property type="match status" value="1"/>
</dbReference>
<dbReference type="PANTHER" id="PTHR12903">
    <property type="entry name" value="MITOCHONDRIAL RIBOSOMAL PROTEIN L24"/>
    <property type="match status" value="1"/>
</dbReference>
<dbReference type="Pfam" id="PF00467">
    <property type="entry name" value="KOW"/>
    <property type="match status" value="1"/>
</dbReference>
<dbReference type="Pfam" id="PF17136">
    <property type="entry name" value="ribosomal_L24"/>
    <property type="match status" value="1"/>
</dbReference>
<dbReference type="SUPFAM" id="SSF50104">
    <property type="entry name" value="Translation proteins SH3-like domain"/>
    <property type="match status" value="1"/>
</dbReference>
<dbReference type="PROSITE" id="PS01108">
    <property type="entry name" value="RIBOSOMAL_L24"/>
    <property type="match status" value="1"/>
</dbReference>
<gene>
    <name evidence="1" type="primary">rplX</name>
    <name type="ordered locus">BTH_I3057</name>
</gene>
<accession>Q2SU38</accession>
<evidence type="ECO:0000255" key="1">
    <source>
        <dbReference type="HAMAP-Rule" id="MF_01326"/>
    </source>
</evidence>
<evidence type="ECO:0000305" key="2"/>
<reference key="1">
    <citation type="journal article" date="2005" name="BMC Genomics">
        <title>Bacterial genome adaptation to niches: divergence of the potential virulence genes in three Burkholderia species of different survival strategies.</title>
        <authorList>
            <person name="Kim H.S."/>
            <person name="Schell M.A."/>
            <person name="Yu Y."/>
            <person name="Ulrich R.L."/>
            <person name="Sarria S.H."/>
            <person name="Nierman W.C."/>
            <person name="DeShazer D."/>
        </authorList>
    </citation>
    <scope>NUCLEOTIDE SEQUENCE [LARGE SCALE GENOMIC DNA]</scope>
    <source>
        <strain>ATCC 700388 / DSM 13276 / CCUG 48851 / CIP 106301 / E264</strain>
    </source>
</reference>
<organism>
    <name type="scientific">Burkholderia thailandensis (strain ATCC 700388 / DSM 13276 / CCUG 48851 / CIP 106301 / E264)</name>
    <dbReference type="NCBI Taxonomy" id="271848"/>
    <lineage>
        <taxon>Bacteria</taxon>
        <taxon>Pseudomonadati</taxon>
        <taxon>Pseudomonadota</taxon>
        <taxon>Betaproteobacteria</taxon>
        <taxon>Burkholderiales</taxon>
        <taxon>Burkholderiaceae</taxon>
        <taxon>Burkholderia</taxon>
        <taxon>pseudomallei group</taxon>
    </lineage>
</organism>
<name>RL24_BURTA</name>